<gene>
    <name evidence="1" type="primary">panB</name>
    <name type="ordered locus">PC1_3118</name>
</gene>
<reference key="1">
    <citation type="submission" date="2009-07" db="EMBL/GenBank/DDBJ databases">
        <title>Complete sequence of Pectobacterium carotovorum subsp. carotovorum PC1.</title>
        <authorList>
            <consortium name="US DOE Joint Genome Institute"/>
            <person name="Lucas S."/>
            <person name="Copeland A."/>
            <person name="Lapidus A."/>
            <person name="Glavina del Rio T."/>
            <person name="Tice H."/>
            <person name="Bruce D."/>
            <person name="Goodwin L."/>
            <person name="Pitluck S."/>
            <person name="Munk A.C."/>
            <person name="Brettin T."/>
            <person name="Detter J.C."/>
            <person name="Han C."/>
            <person name="Tapia R."/>
            <person name="Larimer F."/>
            <person name="Land M."/>
            <person name="Hauser L."/>
            <person name="Kyrpides N."/>
            <person name="Mikhailova N."/>
            <person name="Balakrishnan V."/>
            <person name="Glasner J."/>
            <person name="Perna N.T."/>
        </authorList>
    </citation>
    <scope>NUCLEOTIDE SEQUENCE [LARGE SCALE GENOMIC DNA]</scope>
    <source>
        <strain>PC1</strain>
    </source>
</reference>
<comment type="function">
    <text evidence="1">Catalyzes the reversible reaction in which hydroxymethyl group from 5,10-methylenetetrahydrofolate is transferred onto alpha-ketoisovalerate to form ketopantoate.</text>
</comment>
<comment type="catalytic activity">
    <reaction evidence="1">
        <text>3-methyl-2-oxobutanoate + (6R)-5,10-methylene-5,6,7,8-tetrahydrofolate + H2O = 2-dehydropantoate + (6S)-5,6,7,8-tetrahydrofolate</text>
        <dbReference type="Rhea" id="RHEA:11824"/>
        <dbReference type="ChEBI" id="CHEBI:11561"/>
        <dbReference type="ChEBI" id="CHEBI:11851"/>
        <dbReference type="ChEBI" id="CHEBI:15377"/>
        <dbReference type="ChEBI" id="CHEBI:15636"/>
        <dbReference type="ChEBI" id="CHEBI:57453"/>
        <dbReference type="EC" id="2.1.2.11"/>
    </reaction>
</comment>
<comment type="cofactor">
    <cofactor evidence="1">
        <name>Mg(2+)</name>
        <dbReference type="ChEBI" id="CHEBI:18420"/>
    </cofactor>
    <text evidence="1">Binds 1 Mg(2+) ion per subunit.</text>
</comment>
<comment type="pathway">
    <text evidence="1">Cofactor biosynthesis; (R)-pantothenate biosynthesis; (R)-pantoate from 3-methyl-2-oxobutanoate: step 1/2.</text>
</comment>
<comment type="subunit">
    <text evidence="1">Homodecamer; pentamer of dimers.</text>
</comment>
<comment type="subcellular location">
    <subcellularLocation>
        <location evidence="1">Cytoplasm</location>
    </subcellularLocation>
</comment>
<comment type="similarity">
    <text evidence="1">Belongs to the PanB family.</text>
</comment>
<feature type="chain" id="PRO_1000203476" description="3-methyl-2-oxobutanoate hydroxymethyltransferase">
    <location>
        <begin position="1"/>
        <end position="265"/>
    </location>
</feature>
<feature type="active site" description="Proton acceptor" evidence="1">
    <location>
        <position position="181"/>
    </location>
</feature>
<feature type="binding site" evidence="1">
    <location>
        <begin position="45"/>
        <end position="46"/>
    </location>
    <ligand>
        <name>3-methyl-2-oxobutanoate</name>
        <dbReference type="ChEBI" id="CHEBI:11851"/>
    </ligand>
</feature>
<feature type="binding site" evidence="1">
    <location>
        <position position="45"/>
    </location>
    <ligand>
        <name>Mg(2+)</name>
        <dbReference type="ChEBI" id="CHEBI:18420"/>
    </ligand>
</feature>
<feature type="binding site" evidence="1">
    <location>
        <position position="84"/>
    </location>
    <ligand>
        <name>3-methyl-2-oxobutanoate</name>
        <dbReference type="ChEBI" id="CHEBI:11851"/>
    </ligand>
</feature>
<feature type="binding site" evidence="1">
    <location>
        <position position="84"/>
    </location>
    <ligand>
        <name>Mg(2+)</name>
        <dbReference type="ChEBI" id="CHEBI:18420"/>
    </ligand>
</feature>
<feature type="binding site" evidence="1">
    <location>
        <position position="112"/>
    </location>
    <ligand>
        <name>3-methyl-2-oxobutanoate</name>
        <dbReference type="ChEBI" id="CHEBI:11851"/>
    </ligand>
</feature>
<feature type="binding site" evidence="1">
    <location>
        <position position="114"/>
    </location>
    <ligand>
        <name>Mg(2+)</name>
        <dbReference type="ChEBI" id="CHEBI:18420"/>
    </ligand>
</feature>
<keyword id="KW-0963">Cytoplasm</keyword>
<keyword id="KW-0460">Magnesium</keyword>
<keyword id="KW-0479">Metal-binding</keyword>
<keyword id="KW-0566">Pantothenate biosynthesis</keyword>
<keyword id="KW-0808">Transferase</keyword>
<organism>
    <name type="scientific">Pectobacterium carotovorum subsp. carotovorum (strain PC1)</name>
    <dbReference type="NCBI Taxonomy" id="561230"/>
    <lineage>
        <taxon>Bacteria</taxon>
        <taxon>Pseudomonadati</taxon>
        <taxon>Pseudomonadota</taxon>
        <taxon>Gammaproteobacteria</taxon>
        <taxon>Enterobacterales</taxon>
        <taxon>Pectobacteriaceae</taxon>
        <taxon>Pectobacterium</taxon>
    </lineage>
</organism>
<name>PANB_PECCP</name>
<sequence>MKPTTISHLRQWKQEQRKFATITAYDASFSRLFFEQGIRVMLVGDSLGMTVQGHDSTLPVTTSDIVYHTQCVRRGAPLALVLSDMPFMTYATPEQTFSQAAELMRAGANMVKLEGGSWLAPTVKMLTERAVPVCGHLGLTPQSVNIFGGYKIQGRSESDANQLLADALALEEAGAQLLVLECVPVALAKRVTDALSIPVIGIGAGNVTDGQILVMHDAFGITGDNTPKFAKNFLAQSGGDIRAAVGLYAQEVEQGIYPAEEHSFH</sequence>
<dbReference type="EC" id="2.1.2.11" evidence="1"/>
<dbReference type="EMBL" id="CP001657">
    <property type="protein sequence ID" value="ACT14141.1"/>
    <property type="molecule type" value="Genomic_DNA"/>
</dbReference>
<dbReference type="RefSeq" id="WP_015841286.1">
    <property type="nucleotide sequence ID" value="NC_012917.1"/>
</dbReference>
<dbReference type="SMR" id="C6DC47"/>
<dbReference type="STRING" id="561230.PC1_3118"/>
<dbReference type="KEGG" id="pct:PC1_3118"/>
<dbReference type="eggNOG" id="COG0413">
    <property type="taxonomic scope" value="Bacteria"/>
</dbReference>
<dbReference type="HOGENOM" id="CLU_036645_1_0_6"/>
<dbReference type="OrthoDB" id="9781789at2"/>
<dbReference type="UniPathway" id="UPA00028">
    <property type="reaction ID" value="UER00003"/>
</dbReference>
<dbReference type="Proteomes" id="UP000002736">
    <property type="component" value="Chromosome"/>
</dbReference>
<dbReference type="GO" id="GO:0005737">
    <property type="term" value="C:cytoplasm"/>
    <property type="evidence" value="ECO:0007669"/>
    <property type="project" value="UniProtKB-SubCell"/>
</dbReference>
<dbReference type="GO" id="GO:0003864">
    <property type="term" value="F:3-methyl-2-oxobutanoate hydroxymethyltransferase activity"/>
    <property type="evidence" value="ECO:0007669"/>
    <property type="project" value="UniProtKB-UniRule"/>
</dbReference>
<dbReference type="GO" id="GO:0000287">
    <property type="term" value="F:magnesium ion binding"/>
    <property type="evidence" value="ECO:0007669"/>
    <property type="project" value="TreeGrafter"/>
</dbReference>
<dbReference type="GO" id="GO:0015940">
    <property type="term" value="P:pantothenate biosynthetic process"/>
    <property type="evidence" value="ECO:0007669"/>
    <property type="project" value="UniProtKB-UniRule"/>
</dbReference>
<dbReference type="CDD" id="cd06557">
    <property type="entry name" value="KPHMT-like"/>
    <property type="match status" value="1"/>
</dbReference>
<dbReference type="FunFam" id="3.20.20.60:FF:000003">
    <property type="entry name" value="3-methyl-2-oxobutanoate hydroxymethyltransferase"/>
    <property type="match status" value="1"/>
</dbReference>
<dbReference type="Gene3D" id="3.20.20.60">
    <property type="entry name" value="Phosphoenolpyruvate-binding domains"/>
    <property type="match status" value="1"/>
</dbReference>
<dbReference type="HAMAP" id="MF_00156">
    <property type="entry name" value="PanB"/>
    <property type="match status" value="1"/>
</dbReference>
<dbReference type="InterPro" id="IPR003700">
    <property type="entry name" value="Pantoate_hydroxy_MeTrfase"/>
</dbReference>
<dbReference type="InterPro" id="IPR015813">
    <property type="entry name" value="Pyrv/PenolPyrv_kinase-like_dom"/>
</dbReference>
<dbReference type="InterPro" id="IPR040442">
    <property type="entry name" value="Pyrv_kinase-like_dom_sf"/>
</dbReference>
<dbReference type="NCBIfam" id="TIGR00222">
    <property type="entry name" value="panB"/>
    <property type="match status" value="1"/>
</dbReference>
<dbReference type="NCBIfam" id="NF001452">
    <property type="entry name" value="PRK00311.1"/>
    <property type="match status" value="1"/>
</dbReference>
<dbReference type="PANTHER" id="PTHR20881">
    <property type="entry name" value="3-METHYL-2-OXOBUTANOATE HYDROXYMETHYLTRANSFERASE"/>
    <property type="match status" value="1"/>
</dbReference>
<dbReference type="PANTHER" id="PTHR20881:SF0">
    <property type="entry name" value="3-METHYL-2-OXOBUTANOATE HYDROXYMETHYLTRANSFERASE"/>
    <property type="match status" value="1"/>
</dbReference>
<dbReference type="Pfam" id="PF02548">
    <property type="entry name" value="Pantoate_transf"/>
    <property type="match status" value="1"/>
</dbReference>
<dbReference type="PIRSF" id="PIRSF000388">
    <property type="entry name" value="Pantoate_hydroxy_MeTrfase"/>
    <property type="match status" value="1"/>
</dbReference>
<dbReference type="SUPFAM" id="SSF51621">
    <property type="entry name" value="Phosphoenolpyruvate/pyruvate domain"/>
    <property type="match status" value="1"/>
</dbReference>
<protein>
    <recommendedName>
        <fullName evidence="1">3-methyl-2-oxobutanoate hydroxymethyltransferase</fullName>
        <ecNumber evidence="1">2.1.2.11</ecNumber>
    </recommendedName>
    <alternativeName>
        <fullName evidence="1">Ketopantoate hydroxymethyltransferase</fullName>
        <shortName evidence="1">KPHMT</shortName>
    </alternativeName>
</protein>
<evidence type="ECO:0000255" key="1">
    <source>
        <dbReference type="HAMAP-Rule" id="MF_00156"/>
    </source>
</evidence>
<accession>C6DC47</accession>
<proteinExistence type="inferred from homology"/>